<name>PUR7_BACC2</name>
<proteinExistence type="inferred from homology"/>
<gene>
    <name evidence="1" type="primary">purC</name>
    <name type="ordered locus">BCG9842_B4983</name>
</gene>
<organism>
    <name type="scientific">Bacillus cereus (strain G9842)</name>
    <dbReference type="NCBI Taxonomy" id="405531"/>
    <lineage>
        <taxon>Bacteria</taxon>
        <taxon>Bacillati</taxon>
        <taxon>Bacillota</taxon>
        <taxon>Bacilli</taxon>
        <taxon>Bacillales</taxon>
        <taxon>Bacillaceae</taxon>
        <taxon>Bacillus</taxon>
        <taxon>Bacillus cereus group</taxon>
    </lineage>
</organism>
<sequence length="239" mass="27264">MQKLELLYEGKAKRIYRTESADMVWVEYKDSATAFNGEKKETITGKGRLNNEITTLLFRKLQEVGIKTHFVEKLSETEQLVKKVSIIPLEVVTRNVIAGSLSKRLGMEEGTVLAEPIVEFYFKDDDLGDPLVTEDHIRVLNVASPEQVSVLRDMALQINQVLIDHFASCRVRLVDFKLEFGVTEEGEIILADEISPDTCRLWDETSNEKFDKDVFRRDLGNLTEAYEEILKRLGGISHV</sequence>
<evidence type="ECO:0000255" key="1">
    <source>
        <dbReference type="HAMAP-Rule" id="MF_00137"/>
    </source>
</evidence>
<dbReference type="EC" id="6.3.2.6" evidence="1"/>
<dbReference type="EMBL" id="CP001186">
    <property type="protein sequence ID" value="ACK92999.1"/>
    <property type="molecule type" value="Genomic_DNA"/>
</dbReference>
<dbReference type="RefSeq" id="WP_001170545.1">
    <property type="nucleotide sequence ID" value="NC_011772.1"/>
</dbReference>
<dbReference type="SMR" id="B7IUV0"/>
<dbReference type="KEGG" id="bcg:BCG9842_B4983"/>
<dbReference type="HOGENOM" id="CLU_061495_2_0_9"/>
<dbReference type="UniPathway" id="UPA00074">
    <property type="reaction ID" value="UER00131"/>
</dbReference>
<dbReference type="Proteomes" id="UP000006744">
    <property type="component" value="Chromosome"/>
</dbReference>
<dbReference type="GO" id="GO:0005524">
    <property type="term" value="F:ATP binding"/>
    <property type="evidence" value="ECO:0007669"/>
    <property type="project" value="UniProtKB-KW"/>
</dbReference>
<dbReference type="GO" id="GO:0004639">
    <property type="term" value="F:phosphoribosylaminoimidazolesuccinocarboxamide synthase activity"/>
    <property type="evidence" value="ECO:0007669"/>
    <property type="project" value="UniProtKB-UniRule"/>
</dbReference>
<dbReference type="GO" id="GO:0006189">
    <property type="term" value="P:'de novo' IMP biosynthetic process"/>
    <property type="evidence" value="ECO:0007669"/>
    <property type="project" value="UniProtKB-UniRule"/>
</dbReference>
<dbReference type="GO" id="GO:0009236">
    <property type="term" value="P:cobalamin biosynthetic process"/>
    <property type="evidence" value="ECO:0007669"/>
    <property type="project" value="InterPro"/>
</dbReference>
<dbReference type="CDD" id="cd01415">
    <property type="entry name" value="SAICAR_synt_PurC"/>
    <property type="match status" value="1"/>
</dbReference>
<dbReference type="FunFam" id="3.30.200.20:FF:000189">
    <property type="entry name" value="Phosphoribosylaminoimidazole-succinocarboxamide synthase"/>
    <property type="match status" value="1"/>
</dbReference>
<dbReference type="FunFam" id="3.30.470.20:FF:000006">
    <property type="entry name" value="Phosphoribosylaminoimidazole-succinocarboxamide synthase"/>
    <property type="match status" value="1"/>
</dbReference>
<dbReference type="Gene3D" id="3.30.470.20">
    <property type="entry name" value="ATP-grasp fold, B domain"/>
    <property type="match status" value="1"/>
</dbReference>
<dbReference type="Gene3D" id="3.30.200.20">
    <property type="entry name" value="Phosphorylase Kinase, domain 1"/>
    <property type="match status" value="1"/>
</dbReference>
<dbReference type="HAMAP" id="MF_00137">
    <property type="entry name" value="SAICAR_synth"/>
    <property type="match status" value="1"/>
</dbReference>
<dbReference type="InterPro" id="IPR028923">
    <property type="entry name" value="SAICAR_synt/ADE2_N"/>
</dbReference>
<dbReference type="InterPro" id="IPR033934">
    <property type="entry name" value="SAICAR_synt_PurC"/>
</dbReference>
<dbReference type="InterPro" id="IPR001636">
    <property type="entry name" value="SAICAR_synth"/>
</dbReference>
<dbReference type="InterPro" id="IPR050089">
    <property type="entry name" value="SAICAR_synthetase"/>
</dbReference>
<dbReference type="InterPro" id="IPR018236">
    <property type="entry name" value="SAICAR_synthetase_CS"/>
</dbReference>
<dbReference type="NCBIfam" id="TIGR00081">
    <property type="entry name" value="purC"/>
    <property type="match status" value="1"/>
</dbReference>
<dbReference type="PANTHER" id="PTHR43599">
    <property type="entry name" value="MULTIFUNCTIONAL PROTEIN ADE2"/>
    <property type="match status" value="1"/>
</dbReference>
<dbReference type="PANTHER" id="PTHR43599:SF3">
    <property type="entry name" value="SI:DKEY-6E2.2"/>
    <property type="match status" value="1"/>
</dbReference>
<dbReference type="Pfam" id="PF01259">
    <property type="entry name" value="SAICAR_synt"/>
    <property type="match status" value="1"/>
</dbReference>
<dbReference type="SUPFAM" id="SSF56104">
    <property type="entry name" value="SAICAR synthase-like"/>
    <property type="match status" value="1"/>
</dbReference>
<dbReference type="PROSITE" id="PS01057">
    <property type="entry name" value="SAICAR_SYNTHETASE_1"/>
    <property type="match status" value="1"/>
</dbReference>
<dbReference type="PROSITE" id="PS01058">
    <property type="entry name" value="SAICAR_SYNTHETASE_2"/>
    <property type="match status" value="1"/>
</dbReference>
<accession>B7IUV0</accession>
<keyword id="KW-0067">ATP-binding</keyword>
<keyword id="KW-0436">Ligase</keyword>
<keyword id="KW-0547">Nucleotide-binding</keyword>
<keyword id="KW-0658">Purine biosynthesis</keyword>
<comment type="catalytic activity">
    <reaction evidence="1">
        <text>5-amino-1-(5-phospho-D-ribosyl)imidazole-4-carboxylate + L-aspartate + ATP = (2S)-2-[5-amino-1-(5-phospho-beta-D-ribosyl)imidazole-4-carboxamido]succinate + ADP + phosphate + 2 H(+)</text>
        <dbReference type="Rhea" id="RHEA:22628"/>
        <dbReference type="ChEBI" id="CHEBI:15378"/>
        <dbReference type="ChEBI" id="CHEBI:29991"/>
        <dbReference type="ChEBI" id="CHEBI:30616"/>
        <dbReference type="ChEBI" id="CHEBI:43474"/>
        <dbReference type="ChEBI" id="CHEBI:58443"/>
        <dbReference type="ChEBI" id="CHEBI:77657"/>
        <dbReference type="ChEBI" id="CHEBI:456216"/>
        <dbReference type="EC" id="6.3.2.6"/>
    </reaction>
</comment>
<comment type="pathway">
    <text evidence="1">Purine metabolism; IMP biosynthesis via de novo pathway; 5-amino-1-(5-phospho-D-ribosyl)imidazole-4-carboxamide from 5-amino-1-(5-phospho-D-ribosyl)imidazole-4-carboxylate: step 1/2.</text>
</comment>
<comment type="similarity">
    <text evidence="1">Belongs to the SAICAR synthetase family.</text>
</comment>
<protein>
    <recommendedName>
        <fullName evidence="1">Phosphoribosylaminoimidazole-succinocarboxamide synthase</fullName>
        <ecNumber evidence="1">6.3.2.6</ecNumber>
    </recommendedName>
    <alternativeName>
        <fullName evidence="1">SAICAR synthetase</fullName>
    </alternativeName>
</protein>
<reference key="1">
    <citation type="submission" date="2008-10" db="EMBL/GenBank/DDBJ databases">
        <title>Genome sequence of Bacillus cereus G9842.</title>
        <authorList>
            <person name="Dodson R.J."/>
            <person name="Durkin A.S."/>
            <person name="Rosovitz M.J."/>
            <person name="Rasko D.A."/>
            <person name="Hoffmaster A."/>
            <person name="Ravel J."/>
            <person name="Sutton G."/>
        </authorList>
    </citation>
    <scope>NUCLEOTIDE SEQUENCE [LARGE SCALE GENOMIC DNA]</scope>
    <source>
        <strain>G9842</strain>
    </source>
</reference>
<feature type="chain" id="PRO_1000117825" description="Phosphoribosylaminoimidazole-succinocarboxamide synthase">
    <location>
        <begin position="1"/>
        <end position="239"/>
    </location>
</feature>